<feature type="signal peptide" evidence="2">
    <location>
        <begin position="1"/>
        <end position="41"/>
    </location>
</feature>
<feature type="chain" id="PRO_0000008847" description="Methylamine utilization ferredoxin-type protein MauM">
    <location>
        <begin position="42"/>
        <end position="224"/>
    </location>
</feature>
<feature type="domain" description="4Fe-4S ferredoxin-type 1" evidence="3">
    <location>
        <begin position="54"/>
        <end position="84"/>
    </location>
</feature>
<feature type="domain" description="4Fe-4S ferredoxin-type 2" evidence="3">
    <location>
        <begin position="91"/>
        <end position="124"/>
    </location>
</feature>
<feature type="domain" description="4Fe-4S ferredoxin-type 3" evidence="3">
    <location>
        <begin position="133"/>
        <end position="169"/>
    </location>
</feature>
<feature type="domain" description="4Fe-4S ferredoxin-type 4" evidence="3">
    <location>
        <begin position="177"/>
        <end position="208"/>
    </location>
</feature>
<feature type="binding site" evidence="1">
    <location>
        <position position="64"/>
    </location>
    <ligand>
        <name>[4Fe-4S] cluster</name>
        <dbReference type="ChEBI" id="CHEBI:49883"/>
        <label>1</label>
    </ligand>
</feature>
<feature type="binding site" evidence="1">
    <location>
        <position position="67"/>
    </location>
    <ligand>
        <name>[4Fe-4S] cluster</name>
        <dbReference type="ChEBI" id="CHEBI:49883"/>
        <label>1</label>
    </ligand>
</feature>
<feature type="binding site" evidence="1">
    <location>
        <position position="70"/>
    </location>
    <ligand>
        <name>[4Fe-4S] cluster</name>
        <dbReference type="ChEBI" id="CHEBI:49883"/>
        <label>1</label>
    </ligand>
</feature>
<feature type="binding site" evidence="1">
    <location>
        <position position="74"/>
    </location>
    <ligand>
        <name>[4Fe-4S] cluster</name>
        <dbReference type="ChEBI" id="CHEBI:49883"/>
        <label>1</label>
    </ligand>
</feature>
<feature type="binding site" evidence="1">
    <location>
        <position position="102"/>
    </location>
    <ligand>
        <name>[4Fe-4S] cluster</name>
        <dbReference type="ChEBI" id="CHEBI:49883"/>
        <label>2</label>
    </ligand>
</feature>
<feature type="binding site" evidence="1">
    <location>
        <position position="105"/>
    </location>
    <ligand>
        <name>[4Fe-4S] cluster</name>
        <dbReference type="ChEBI" id="CHEBI:49883"/>
        <label>2</label>
    </ligand>
</feature>
<feature type="binding site" evidence="1">
    <location>
        <position position="110"/>
    </location>
    <ligand>
        <name>[4Fe-4S] cluster</name>
        <dbReference type="ChEBI" id="CHEBI:49883"/>
        <label>2</label>
    </ligand>
</feature>
<feature type="binding site" evidence="1">
    <location>
        <position position="114"/>
    </location>
    <ligand>
        <name>[4Fe-4S] cluster</name>
        <dbReference type="ChEBI" id="CHEBI:49883"/>
        <label>2</label>
    </ligand>
</feature>
<feature type="binding site" evidence="1">
    <location>
        <position position="142"/>
    </location>
    <ligand>
        <name>[4Fe-4S] cluster</name>
        <dbReference type="ChEBI" id="CHEBI:49883"/>
        <label>3</label>
    </ligand>
</feature>
<feature type="binding site" evidence="1">
    <location>
        <position position="150"/>
    </location>
    <ligand>
        <name>[4Fe-4S] cluster</name>
        <dbReference type="ChEBI" id="CHEBI:49883"/>
        <label>3</label>
    </ligand>
</feature>
<feature type="binding site" evidence="1">
    <location>
        <position position="153"/>
    </location>
    <ligand>
        <name>[4Fe-4S] cluster</name>
        <dbReference type="ChEBI" id="CHEBI:49883"/>
        <label>3</label>
    </ligand>
</feature>
<feature type="binding site" evidence="1">
    <location>
        <position position="157"/>
    </location>
    <ligand>
        <name>[4Fe-4S] cluster</name>
        <dbReference type="ChEBI" id="CHEBI:49883"/>
        <label>3</label>
    </ligand>
</feature>
<feature type="binding site" evidence="1">
    <location>
        <position position="186"/>
    </location>
    <ligand>
        <name>[4Fe-4S] cluster</name>
        <dbReference type="ChEBI" id="CHEBI:49883"/>
        <label>4</label>
    </ligand>
</feature>
<feature type="binding site" evidence="1">
    <location>
        <position position="189"/>
    </location>
    <ligand>
        <name>[4Fe-4S] cluster</name>
        <dbReference type="ChEBI" id="CHEBI:49883"/>
        <label>4</label>
    </ligand>
</feature>
<feature type="binding site" evidence="1">
    <location>
        <position position="192"/>
    </location>
    <ligand>
        <name>[4Fe-4S] cluster</name>
        <dbReference type="ChEBI" id="CHEBI:49883"/>
        <label>4</label>
    </ligand>
</feature>
<feature type="binding site" evidence="1">
    <location>
        <position position="196"/>
    </location>
    <ligand>
        <name>[4Fe-4S] cluster</name>
        <dbReference type="ChEBI" id="CHEBI:49883"/>
        <label>4</label>
    </ligand>
</feature>
<sequence length="224" mass="23695">MEARMTGRRKVTRRDAMADAARAVGVACLGGFSLAALVRTASPVDARAIRPPGALPEQDFLAACVHCGLCVQACPYGTLSLAEWSDEAELGTPFFTPREVPCYMCKDVPCARACPTGALDRDIPSIRDADMGVAVLVGHETCLNYKGLNCSICVRVCPIRGDAISLEPQEIDGRRVMIPVVHSASCTGCGTCEKQCVLGHAAIRVLPRDLGLGGPGRNRAGRKA</sequence>
<evidence type="ECO:0000250" key="1"/>
<evidence type="ECO:0000255" key="2"/>
<evidence type="ECO:0000255" key="3">
    <source>
        <dbReference type="PROSITE-ProRule" id="PRU00711"/>
    </source>
</evidence>
<evidence type="ECO:0000305" key="4"/>
<dbReference type="EMBL" id="U15028">
    <property type="protein sequence ID" value="AAA86468.1"/>
    <property type="molecule type" value="Genomic_DNA"/>
</dbReference>
<dbReference type="EMBL" id="CP000491">
    <property type="protein sequence ID" value="ABL72798.1"/>
    <property type="molecule type" value="Genomic_DNA"/>
</dbReference>
<dbReference type="PIR" id="S65960">
    <property type="entry name" value="S65960"/>
</dbReference>
<dbReference type="EnsemblBacteria" id="ABL72798">
    <property type="protein sequence ID" value="ABL72798"/>
    <property type="gene ID" value="Pden_4737"/>
</dbReference>
<dbReference type="KEGG" id="pde:Pden_4737"/>
<dbReference type="eggNOG" id="COG0437">
    <property type="taxonomic scope" value="Bacteria"/>
</dbReference>
<dbReference type="HOGENOM" id="CLU_077329_0_0_5"/>
<dbReference type="OrthoDB" id="9808559at2"/>
<dbReference type="UniPathway" id="UPA00895"/>
<dbReference type="Proteomes" id="UP000000361">
    <property type="component" value="Plasmid pPD1222"/>
</dbReference>
<dbReference type="GO" id="GO:0051539">
    <property type="term" value="F:4 iron, 4 sulfur cluster binding"/>
    <property type="evidence" value="ECO:0007669"/>
    <property type="project" value="UniProtKB-KW"/>
</dbReference>
<dbReference type="GO" id="GO:0046872">
    <property type="term" value="F:metal ion binding"/>
    <property type="evidence" value="ECO:0007669"/>
    <property type="project" value="UniProtKB-KW"/>
</dbReference>
<dbReference type="CDD" id="cd16373">
    <property type="entry name" value="DMSOR_beta_like"/>
    <property type="match status" value="1"/>
</dbReference>
<dbReference type="Gene3D" id="3.30.70.20">
    <property type="match status" value="2"/>
</dbReference>
<dbReference type="InterPro" id="IPR017896">
    <property type="entry name" value="4Fe4S_Fe-S-bd"/>
</dbReference>
<dbReference type="InterPro" id="IPR017900">
    <property type="entry name" value="4Fe4S_Fe_S_CS"/>
</dbReference>
<dbReference type="InterPro" id="IPR004494">
    <property type="entry name" value="MauM_NapG"/>
</dbReference>
<dbReference type="NCBIfam" id="TIGR00397">
    <property type="entry name" value="mauM_napG"/>
    <property type="match status" value="1"/>
</dbReference>
<dbReference type="NCBIfam" id="NF007012">
    <property type="entry name" value="PRK09476.1"/>
    <property type="match status" value="1"/>
</dbReference>
<dbReference type="Pfam" id="PF12838">
    <property type="entry name" value="Fer4_7"/>
    <property type="match status" value="2"/>
</dbReference>
<dbReference type="SUPFAM" id="SSF54862">
    <property type="entry name" value="4Fe-4S ferredoxins"/>
    <property type="match status" value="1"/>
</dbReference>
<dbReference type="PROSITE" id="PS00198">
    <property type="entry name" value="4FE4S_FER_1"/>
    <property type="match status" value="1"/>
</dbReference>
<dbReference type="PROSITE" id="PS51379">
    <property type="entry name" value="4FE4S_FER_2"/>
    <property type="match status" value="4"/>
</dbReference>
<proteinExistence type="inferred from homology"/>
<keyword id="KW-0004">4Fe-4S</keyword>
<keyword id="KW-0249">Electron transport</keyword>
<keyword id="KW-0408">Iron</keyword>
<keyword id="KW-0411">Iron-sulfur</keyword>
<keyword id="KW-0479">Metal-binding</keyword>
<keyword id="KW-0614">Plasmid</keyword>
<keyword id="KW-1185">Reference proteome</keyword>
<keyword id="KW-0677">Repeat</keyword>
<keyword id="KW-0732">Signal</keyword>
<keyword id="KW-0813">Transport</keyword>
<protein>
    <recommendedName>
        <fullName>Methylamine utilization ferredoxin-type protein MauM</fullName>
    </recommendedName>
</protein>
<name>MAUM_PARDP</name>
<organism>
    <name type="scientific">Paracoccus denitrificans (strain Pd 1222)</name>
    <dbReference type="NCBI Taxonomy" id="318586"/>
    <lineage>
        <taxon>Bacteria</taxon>
        <taxon>Pseudomonadati</taxon>
        <taxon>Pseudomonadota</taxon>
        <taxon>Alphaproteobacteria</taxon>
        <taxon>Rhodobacterales</taxon>
        <taxon>Paracoccaceae</taxon>
        <taxon>Paracoccus</taxon>
    </lineage>
</organism>
<reference key="1">
    <citation type="journal article" date="1995" name="Eur. J. Biochem.">
        <title>Mutational analysis of mau genes involved in methylamine metabolism in Paracoccus denitrificans.</title>
        <authorList>
            <person name="van der Palen C.J."/>
            <person name="Slotboom D.J."/>
            <person name="Jongejan L."/>
            <person name="Reijnders W.N."/>
            <person name="Harms N."/>
            <person name="Duine J.A."/>
            <person name="van Spanning R.J."/>
        </authorList>
    </citation>
    <scope>NUCLEOTIDE SEQUENCE [GENOMIC DNA]</scope>
</reference>
<reference key="2">
    <citation type="submission" date="2006-12" db="EMBL/GenBank/DDBJ databases">
        <title>Complete sequence of plasmid 1 of Paracoccus denitrificans PD1222.</title>
        <authorList>
            <person name="Copeland A."/>
            <person name="Lucas S."/>
            <person name="Lapidus A."/>
            <person name="Barry K."/>
            <person name="Detter J.C."/>
            <person name="Glavina del Rio T."/>
            <person name="Hammon N."/>
            <person name="Israni S."/>
            <person name="Dalin E."/>
            <person name="Tice H."/>
            <person name="Pitluck S."/>
            <person name="Munk A.C."/>
            <person name="Brettin T."/>
            <person name="Bruce D."/>
            <person name="Han C."/>
            <person name="Tapia R."/>
            <person name="Gilna P."/>
            <person name="Schmutz J."/>
            <person name="Larimer F."/>
            <person name="Land M."/>
            <person name="Hauser L."/>
            <person name="Kyrpides N."/>
            <person name="Lykidis A."/>
            <person name="Spiro S."/>
            <person name="Richardson D.J."/>
            <person name="Moir J.W.B."/>
            <person name="Ferguson S.J."/>
            <person name="van Spanning R.J.M."/>
            <person name="Richardson P."/>
        </authorList>
    </citation>
    <scope>NUCLEOTIDE SEQUENCE [LARGE SCALE GENOMIC DNA]</scope>
    <source>
        <strain>Pd 1222</strain>
    </source>
</reference>
<comment type="function">
    <text evidence="4">Involved in electron transfer.</text>
</comment>
<comment type="pathway">
    <text>One-carbon metabolism; methylamine degradation.</text>
</comment>
<accession>Q51659</accession>
<accession>A1BBA4</accession>
<gene>
    <name type="primary">mauM</name>
    <name type="ordered locus">Pden_4737</name>
</gene>
<geneLocation type="plasmid">
    <name>pPD1222</name>
</geneLocation>